<gene>
    <name evidence="1" type="primary">rpsF</name>
    <name type="ordered locus">BR0455</name>
    <name type="ordered locus">BS1330_I0456</name>
</gene>
<accession>Q8G274</accession>
<accession>G0K704</accession>
<evidence type="ECO:0000255" key="1">
    <source>
        <dbReference type="HAMAP-Rule" id="MF_00360"/>
    </source>
</evidence>
<evidence type="ECO:0000256" key="2">
    <source>
        <dbReference type="SAM" id="MobiDB-lite"/>
    </source>
</evidence>
<evidence type="ECO:0000305" key="3"/>
<sequence>MALYEHVLLARQDISQQQVDALVEQFKGVLEANGGKFGKVENWGLRPLTYRIKKNRKAYYTLVNIDAPAAAVAEMERQMRINEDVLRFLTVRVEEHEEGQSAMLTRRDDRRERDGDDRPRRREGGFDRGDRGDRGPRRPRDTEAGEGA</sequence>
<feature type="chain" id="PRO_0000176739" description="Small ribosomal subunit protein bS6">
    <location>
        <begin position="1"/>
        <end position="148"/>
    </location>
</feature>
<feature type="region of interest" description="Disordered" evidence="2">
    <location>
        <begin position="96"/>
        <end position="148"/>
    </location>
</feature>
<organism>
    <name type="scientific">Brucella suis biovar 1 (strain 1330)</name>
    <dbReference type="NCBI Taxonomy" id="204722"/>
    <lineage>
        <taxon>Bacteria</taxon>
        <taxon>Pseudomonadati</taxon>
        <taxon>Pseudomonadota</taxon>
        <taxon>Alphaproteobacteria</taxon>
        <taxon>Hyphomicrobiales</taxon>
        <taxon>Brucellaceae</taxon>
        <taxon>Brucella/Ochrobactrum group</taxon>
        <taxon>Brucella</taxon>
    </lineage>
</organism>
<dbReference type="EMBL" id="AE014291">
    <property type="protein sequence ID" value="AAN29398.1"/>
    <property type="molecule type" value="Genomic_DNA"/>
</dbReference>
<dbReference type="EMBL" id="CP002997">
    <property type="protein sequence ID" value="AEM17811.1"/>
    <property type="molecule type" value="Genomic_DNA"/>
</dbReference>
<dbReference type="RefSeq" id="WP_004690607.1">
    <property type="nucleotide sequence ID" value="NZ_KN046804.1"/>
</dbReference>
<dbReference type="SMR" id="Q8G274"/>
<dbReference type="GeneID" id="55590213"/>
<dbReference type="KEGG" id="bms:BR0455"/>
<dbReference type="KEGG" id="bsi:BS1330_I0456"/>
<dbReference type="PATRIC" id="fig|204722.21.peg.1411"/>
<dbReference type="HOGENOM" id="CLU_113441_2_0_5"/>
<dbReference type="PhylomeDB" id="Q8G274"/>
<dbReference type="Proteomes" id="UP000007104">
    <property type="component" value="Chromosome I"/>
</dbReference>
<dbReference type="GO" id="GO:0022627">
    <property type="term" value="C:cytosolic small ribosomal subunit"/>
    <property type="evidence" value="ECO:0007669"/>
    <property type="project" value="TreeGrafter"/>
</dbReference>
<dbReference type="GO" id="GO:0070181">
    <property type="term" value="F:small ribosomal subunit rRNA binding"/>
    <property type="evidence" value="ECO:0007669"/>
    <property type="project" value="TreeGrafter"/>
</dbReference>
<dbReference type="GO" id="GO:0003735">
    <property type="term" value="F:structural constituent of ribosome"/>
    <property type="evidence" value="ECO:0007669"/>
    <property type="project" value="InterPro"/>
</dbReference>
<dbReference type="GO" id="GO:0006412">
    <property type="term" value="P:translation"/>
    <property type="evidence" value="ECO:0007669"/>
    <property type="project" value="UniProtKB-UniRule"/>
</dbReference>
<dbReference type="CDD" id="cd00473">
    <property type="entry name" value="bS6"/>
    <property type="match status" value="1"/>
</dbReference>
<dbReference type="Gene3D" id="3.30.70.60">
    <property type="match status" value="1"/>
</dbReference>
<dbReference type="HAMAP" id="MF_00360">
    <property type="entry name" value="Ribosomal_bS6"/>
    <property type="match status" value="1"/>
</dbReference>
<dbReference type="InterPro" id="IPR000529">
    <property type="entry name" value="Ribosomal_bS6"/>
</dbReference>
<dbReference type="InterPro" id="IPR035980">
    <property type="entry name" value="Ribosomal_bS6_sf"/>
</dbReference>
<dbReference type="InterPro" id="IPR020814">
    <property type="entry name" value="Ribosomal_S6_plastid/chlpt"/>
</dbReference>
<dbReference type="InterPro" id="IPR014717">
    <property type="entry name" value="Transl_elong_EF1B/ribsomal_bS6"/>
</dbReference>
<dbReference type="NCBIfam" id="TIGR00166">
    <property type="entry name" value="S6"/>
    <property type="match status" value="1"/>
</dbReference>
<dbReference type="PANTHER" id="PTHR21011">
    <property type="entry name" value="MITOCHONDRIAL 28S RIBOSOMAL PROTEIN S6"/>
    <property type="match status" value="1"/>
</dbReference>
<dbReference type="PANTHER" id="PTHR21011:SF1">
    <property type="entry name" value="SMALL RIBOSOMAL SUBUNIT PROTEIN BS6M"/>
    <property type="match status" value="1"/>
</dbReference>
<dbReference type="Pfam" id="PF01250">
    <property type="entry name" value="Ribosomal_S6"/>
    <property type="match status" value="1"/>
</dbReference>
<dbReference type="SUPFAM" id="SSF54995">
    <property type="entry name" value="Ribosomal protein S6"/>
    <property type="match status" value="1"/>
</dbReference>
<keyword id="KW-0687">Ribonucleoprotein</keyword>
<keyword id="KW-0689">Ribosomal protein</keyword>
<keyword id="KW-0694">RNA-binding</keyword>
<keyword id="KW-0699">rRNA-binding</keyword>
<protein>
    <recommendedName>
        <fullName evidence="1">Small ribosomal subunit protein bS6</fullName>
    </recommendedName>
    <alternativeName>
        <fullName evidence="3">30S ribosomal protein S6</fullName>
    </alternativeName>
</protein>
<name>RS6_BRUSU</name>
<comment type="function">
    <text evidence="1">Binds together with bS18 to 16S ribosomal RNA.</text>
</comment>
<comment type="similarity">
    <text evidence="1">Belongs to the bacterial ribosomal protein bS6 family.</text>
</comment>
<reference key="1">
    <citation type="journal article" date="2002" name="Proc. Natl. Acad. Sci. U.S.A.">
        <title>The Brucella suis genome reveals fundamental similarities between animal and plant pathogens and symbionts.</title>
        <authorList>
            <person name="Paulsen I.T."/>
            <person name="Seshadri R."/>
            <person name="Nelson K.E."/>
            <person name="Eisen J.A."/>
            <person name="Heidelberg J.F."/>
            <person name="Read T.D."/>
            <person name="Dodson R.J."/>
            <person name="Umayam L.A."/>
            <person name="Brinkac L.M."/>
            <person name="Beanan M.J."/>
            <person name="Daugherty S.C."/>
            <person name="DeBoy R.T."/>
            <person name="Durkin A.S."/>
            <person name="Kolonay J.F."/>
            <person name="Madupu R."/>
            <person name="Nelson W.C."/>
            <person name="Ayodeji B."/>
            <person name="Kraul M."/>
            <person name="Shetty J."/>
            <person name="Malek J.A."/>
            <person name="Van Aken S.E."/>
            <person name="Riedmuller S."/>
            <person name="Tettelin H."/>
            <person name="Gill S.R."/>
            <person name="White O."/>
            <person name="Salzberg S.L."/>
            <person name="Hoover D.L."/>
            <person name="Lindler L.E."/>
            <person name="Halling S.M."/>
            <person name="Boyle S.M."/>
            <person name="Fraser C.M."/>
        </authorList>
    </citation>
    <scope>NUCLEOTIDE SEQUENCE [LARGE SCALE GENOMIC DNA]</scope>
    <source>
        <strain>1330</strain>
    </source>
</reference>
<reference key="2">
    <citation type="journal article" date="2011" name="J. Bacteriol.">
        <title>Revised genome sequence of Brucella suis 1330.</title>
        <authorList>
            <person name="Tae H."/>
            <person name="Shallom S."/>
            <person name="Settlage R."/>
            <person name="Preston D."/>
            <person name="Adams L.G."/>
            <person name="Garner H.R."/>
        </authorList>
    </citation>
    <scope>NUCLEOTIDE SEQUENCE [LARGE SCALE GENOMIC DNA]</scope>
    <source>
        <strain>1330</strain>
    </source>
</reference>
<proteinExistence type="inferred from homology"/>